<evidence type="ECO:0000255" key="1"/>
<evidence type="ECO:0000269" key="2">
    <source>
    </source>
</evidence>
<evidence type="ECO:0000269" key="3">
    <source>
    </source>
</evidence>
<evidence type="ECO:0000269" key="4">
    <source>
    </source>
</evidence>
<evidence type="ECO:0000269" key="5">
    <source>
    </source>
</evidence>
<evidence type="ECO:0000269" key="6">
    <source>
    </source>
</evidence>
<evidence type="ECO:0000269" key="7">
    <source>
    </source>
</evidence>
<evidence type="ECO:0000269" key="8">
    <source>
    </source>
</evidence>
<evidence type="ECO:0000269" key="9">
    <source>
    </source>
</evidence>
<evidence type="ECO:0000305" key="10"/>
<evidence type="ECO:0000312" key="11">
    <source>
        <dbReference type="SGD" id="S000000351"/>
    </source>
</evidence>
<feature type="chain" id="PRO_0000202496" description="Vacuolar histidine transporter YPQ3">
    <location>
        <begin position="1"/>
        <end position="296"/>
    </location>
</feature>
<feature type="topological domain" description="Vacuolar" evidence="1">
    <location>
        <begin position="1"/>
        <end position="12"/>
    </location>
</feature>
<feature type="transmembrane region" description="Helical" evidence="1">
    <location>
        <begin position="13"/>
        <end position="33"/>
    </location>
</feature>
<feature type="topological domain" description="Cytoplasmic" evidence="1">
    <location>
        <begin position="34"/>
        <end position="44"/>
    </location>
</feature>
<feature type="transmembrane region" description="Helical" evidence="1">
    <location>
        <begin position="45"/>
        <end position="65"/>
    </location>
</feature>
<feature type="topological domain" description="Vacuolar" evidence="1">
    <location>
        <begin position="66"/>
        <end position="68"/>
    </location>
</feature>
<feature type="transmembrane region" description="Helical" evidence="1">
    <location>
        <begin position="69"/>
        <end position="89"/>
    </location>
</feature>
<feature type="topological domain" description="Cytoplasmic" evidence="1">
    <location>
        <begin position="90"/>
        <end position="163"/>
    </location>
</feature>
<feature type="transmembrane region" description="Helical" evidence="1">
    <location>
        <begin position="164"/>
        <end position="184"/>
    </location>
</feature>
<feature type="topological domain" description="Vacuolar" evidence="1">
    <location>
        <begin position="185"/>
        <end position="199"/>
    </location>
</feature>
<feature type="transmembrane region" description="Helical" evidence="1">
    <location>
        <begin position="200"/>
        <end position="220"/>
    </location>
</feature>
<feature type="topological domain" description="Cytoplasmic" evidence="1">
    <location>
        <begin position="221"/>
        <end position="238"/>
    </location>
</feature>
<feature type="transmembrane region" description="Helical" evidence="1">
    <location>
        <begin position="239"/>
        <end position="259"/>
    </location>
</feature>
<feature type="topological domain" description="Vacuolar" evidence="1">
    <location>
        <begin position="260"/>
        <end position="262"/>
    </location>
</feature>
<feature type="transmembrane region" description="Helical" evidence="1">
    <location>
        <begin position="263"/>
        <end position="283"/>
    </location>
</feature>
<feature type="topological domain" description="Cytoplasmic" evidence="1">
    <location>
        <begin position="284"/>
        <end position="296"/>
    </location>
</feature>
<feature type="domain" description="PQ-loop 1">
    <location>
        <begin position="10"/>
        <end position="76"/>
    </location>
</feature>
<feature type="domain" description="PQ-loop 2">
    <location>
        <begin position="208"/>
        <end position="270"/>
    </location>
</feature>
<keyword id="KW-0029">Amino-acid transport</keyword>
<keyword id="KW-0472">Membrane</keyword>
<keyword id="KW-0496">Mitochondrion</keyword>
<keyword id="KW-1185">Reference proteome</keyword>
<keyword id="KW-0677">Repeat</keyword>
<keyword id="KW-0812">Transmembrane</keyword>
<keyword id="KW-1133">Transmembrane helix</keyword>
<keyword id="KW-0813">Transport</keyword>
<keyword id="KW-0926">Vacuole</keyword>
<gene>
    <name evidence="11" type="primary">RTC2</name>
    <name type="synonym">YPQ3</name>
    <name type="ordered locus">YBR147W</name>
    <name type="ORF">YBR1124</name>
</gene>
<accession>P38279</accession>
<accession>D6VQE2</accession>
<protein>
    <recommendedName>
        <fullName>Vacuolar histidine transporter YPQ3</fullName>
    </recommendedName>
    <alternativeName>
        <fullName>PQ-loop repeat-containing protein 3</fullName>
    </alternativeName>
    <alternativeName>
        <fullName>Protein RTC2</fullName>
    </alternativeName>
    <alternativeName>
        <fullName>Restriction of telomere capping protein 2</fullName>
    </alternativeName>
</protein>
<name>YPQ3_YEAST</name>
<dbReference type="EMBL" id="Z36016">
    <property type="protein sequence ID" value="CAA85105.1"/>
    <property type="molecule type" value="Genomic_DNA"/>
</dbReference>
<dbReference type="EMBL" id="BK006936">
    <property type="protein sequence ID" value="DAA07262.1"/>
    <property type="molecule type" value="Genomic_DNA"/>
</dbReference>
<dbReference type="PIR" id="S46018">
    <property type="entry name" value="S46018"/>
</dbReference>
<dbReference type="RefSeq" id="NP_009705.1">
    <property type="nucleotide sequence ID" value="NM_001178495.1"/>
</dbReference>
<dbReference type="SMR" id="P38279"/>
<dbReference type="BioGRID" id="32846">
    <property type="interactions" value="161"/>
</dbReference>
<dbReference type="FunCoup" id="P38279">
    <property type="interactions" value="424"/>
</dbReference>
<dbReference type="STRING" id="4932.YBR147W"/>
<dbReference type="TCDB" id="2.A.43.2.7">
    <property type="family name" value="the lysosomal cystine transporter (lct) family"/>
</dbReference>
<dbReference type="iPTMnet" id="P38279"/>
<dbReference type="PaxDb" id="4932-YBR147W"/>
<dbReference type="PeptideAtlas" id="P38279"/>
<dbReference type="EnsemblFungi" id="YBR147W_mRNA">
    <property type="protein sequence ID" value="YBR147W"/>
    <property type="gene ID" value="YBR147W"/>
</dbReference>
<dbReference type="GeneID" id="852444"/>
<dbReference type="KEGG" id="sce:YBR147W"/>
<dbReference type="AGR" id="SGD:S000000351"/>
<dbReference type="SGD" id="S000000351">
    <property type="gene designation" value="RTC2"/>
</dbReference>
<dbReference type="VEuPathDB" id="FungiDB:YBR147W"/>
<dbReference type="eggNOG" id="KOG2913">
    <property type="taxonomic scope" value="Eukaryota"/>
</dbReference>
<dbReference type="GeneTree" id="ENSGT00940000176777"/>
<dbReference type="HOGENOM" id="CLU_019699_1_0_1"/>
<dbReference type="InParanoid" id="P38279"/>
<dbReference type="OMA" id="QIMQNFR"/>
<dbReference type="OrthoDB" id="8048523at2759"/>
<dbReference type="BioCyc" id="YEAST:G3O-29099-MONOMER"/>
<dbReference type="Reactome" id="R-SCE-5223345">
    <property type="pathway name" value="Miscellaneous transport and binding events"/>
</dbReference>
<dbReference type="BioGRID-ORCS" id="852444">
    <property type="hits" value="4 hits in 10 CRISPR screens"/>
</dbReference>
<dbReference type="PRO" id="PR:P38279"/>
<dbReference type="Proteomes" id="UP000002311">
    <property type="component" value="Chromosome II"/>
</dbReference>
<dbReference type="RNAct" id="P38279">
    <property type="molecule type" value="protein"/>
</dbReference>
<dbReference type="GO" id="GO:0000329">
    <property type="term" value="C:fungal-type vacuole membrane"/>
    <property type="evidence" value="ECO:0000314"/>
    <property type="project" value="SGD"/>
</dbReference>
<dbReference type="GO" id="GO:0016020">
    <property type="term" value="C:membrane"/>
    <property type="evidence" value="ECO:0000318"/>
    <property type="project" value="GO_Central"/>
</dbReference>
<dbReference type="GO" id="GO:0031966">
    <property type="term" value="C:mitochondrial membrane"/>
    <property type="evidence" value="ECO:0007669"/>
    <property type="project" value="UniProtKB-SubCell"/>
</dbReference>
<dbReference type="GO" id="GO:0005739">
    <property type="term" value="C:mitochondrion"/>
    <property type="evidence" value="ECO:0007005"/>
    <property type="project" value="SGD"/>
</dbReference>
<dbReference type="GO" id="GO:0015174">
    <property type="term" value="F:basic amino acid transmembrane transporter activity"/>
    <property type="evidence" value="ECO:0000315"/>
    <property type="project" value="SGD"/>
</dbReference>
<dbReference type="GO" id="GO:0005290">
    <property type="term" value="F:L-histidine transmembrane transporter activity"/>
    <property type="evidence" value="ECO:0000315"/>
    <property type="project" value="UniProtKB"/>
</dbReference>
<dbReference type="GO" id="GO:0034488">
    <property type="term" value="P:basic amino acid transmembrane export from vacuole"/>
    <property type="evidence" value="ECO:0000315"/>
    <property type="project" value="SGD"/>
</dbReference>
<dbReference type="GO" id="GO:0090513">
    <property type="term" value="P:L-histidine transmembrane import into vacuole"/>
    <property type="evidence" value="ECO:0000315"/>
    <property type="project" value="UniProtKB"/>
</dbReference>
<dbReference type="FunFam" id="1.20.1280.290:FF:000011">
    <property type="entry name" value="PQ loop repeat protein"/>
    <property type="match status" value="1"/>
</dbReference>
<dbReference type="Gene3D" id="1.20.1280.290">
    <property type="match status" value="2"/>
</dbReference>
<dbReference type="InterPro" id="IPR051415">
    <property type="entry name" value="LAAT-1"/>
</dbReference>
<dbReference type="InterPro" id="IPR006603">
    <property type="entry name" value="PQ-loop_rpt"/>
</dbReference>
<dbReference type="PANTHER" id="PTHR16201">
    <property type="entry name" value="SEVEN TRANSMEMBRANE PROTEIN 1-RELATED"/>
    <property type="match status" value="1"/>
</dbReference>
<dbReference type="PANTHER" id="PTHR16201:SF35">
    <property type="entry name" value="VACUOLAR AMINO ACID TRANSPORTER YPQ1-RELATED"/>
    <property type="match status" value="1"/>
</dbReference>
<dbReference type="Pfam" id="PF04193">
    <property type="entry name" value="PQ-loop"/>
    <property type="match status" value="2"/>
</dbReference>
<dbReference type="SMART" id="SM00679">
    <property type="entry name" value="CTNS"/>
    <property type="match status" value="2"/>
</dbReference>
<comment type="function">
    <text evidence="8 9">Amino acid transporter that moves histidine into the vacuole (PubMed:26928127). May also contribute to low affinity arginine import into the vacuole (PubMed:32776922). May function as an amino acid/proton antiporter (PubMed:26928127).</text>
</comment>
<comment type="subcellular location">
    <subcellularLocation>
        <location evidence="7">Vacuole membrane</location>
        <topology evidence="7">Multi-pass membrane protein</topology>
    </subcellularLocation>
    <subcellularLocation>
        <location evidence="4">Mitochondrion membrane</location>
        <topology evidence="4">Multi-pass membrane protein</topology>
    </subcellularLocation>
</comment>
<comment type="induction">
    <text evidence="5 7 8">Up-regulated during histidine starvation (PubMed:26928127). Up-regulated by addition of ammonia or amino acids to a nitrogen-depleted medium (PubMed:17986253). Down-regulated by excess lysine (PubMed:23169667).</text>
</comment>
<comment type="disruption phenotype">
    <text evidence="2 3 6 8">Decreases histidine import into the vacuole (PubMed:26928127). Resistant to fluconazole and caspofungin (PubMed:12702675, PubMed:15388447). Suppresses CDC13-1 temperature sensitivity (PubMed:18845848).</text>
</comment>
<comment type="similarity">
    <text evidence="10">Belongs to the laat-1 family.</text>
</comment>
<organism>
    <name type="scientific">Saccharomyces cerevisiae (strain ATCC 204508 / S288c)</name>
    <name type="common">Baker's yeast</name>
    <dbReference type="NCBI Taxonomy" id="559292"/>
    <lineage>
        <taxon>Eukaryota</taxon>
        <taxon>Fungi</taxon>
        <taxon>Dikarya</taxon>
        <taxon>Ascomycota</taxon>
        <taxon>Saccharomycotina</taxon>
        <taxon>Saccharomycetes</taxon>
        <taxon>Saccharomycetales</taxon>
        <taxon>Saccharomycetaceae</taxon>
        <taxon>Saccharomyces</taxon>
    </lineage>
</organism>
<sequence length="296" mass="33497">MKLIPIILNAKNLSGMAGSISICCWIVVFVPQIYENFRRQSAEGLSLLFIVLWLLGDIFNVMGAMMQNLLPTMIILAAYYTLADLILLIQCMWYDKEKKSILQEVKKNVDPVHLPPANPINETVLQDVFNEYEPLLPRIEEEDSQSYSSLELGRTIVVKERENFFNDFLIVSGVLIAGILSWYISYCSGLDNGIPKKKPAFEQINLPAQILGYLSAILYLGSRIPQIVLNFKRKSCEGVSFLFFLFACLGNTSFIISVLSASWLIGSAGTLLMDFTVFIQFFLYAKPKYEKILIDN</sequence>
<reference key="1">
    <citation type="journal article" date="1994" name="EMBO J.">
        <title>Complete DNA sequence of yeast chromosome II.</title>
        <authorList>
            <person name="Feldmann H."/>
            <person name="Aigle M."/>
            <person name="Aljinovic G."/>
            <person name="Andre B."/>
            <person name="Baclet M.C."/>
            <person name="Barthe C."/>
            <person name="Baur A."/>
            <person name="Becam A.-M."/>
            <person name="Biteau N."/>
            <person name="Boles E."/>
            <person name="Brandt T."/>
            <person name="Brendel M."/>
            <person name="Brueckner M."/>
            <person name="Bussereau F."/>
            <person name="Christiansen C."/>
            <person name="Contreras R."/>
            <person name="Crouzet M."/>
            <person name="Cziepluch C."/>
            <person name="Demolis N."/>
            <person name="Delaveau T."/>
            <person name="Doignon F."/>
            <person name="Domdey H."/>
            <person name="Duesterhus S."/>
            <person name="Dubois E."/>
            <person name="Dujon B."/>
            <person name="El Bakkoury M."/>
            <person name="Entian K.-D."/>
            <person name="Feuermann M."/>
            <person name="Fiers W."/>
            <person name="Fobo G.M."/>
            <person name="Fritz C."/>
            <person name="Gassenhuber J."/>
            <person name="Glansdorff N."/>
            <person name="Goffeau A."/>
            <person name="Grivell L.A."/>
            <person name="de Haan M."/>
            <person name="Hein C."/>
            <person name="Herbert C.J."/>
            <person name="Hollenberg C.P."/>
            <person name="Holmstroem K."/>
            <person name="Jacq C."/>
            <person name="Jacquet M."/>
            <person name="Jauniaux J.-C."/>
            <person name="Jonniaux J.-L."/>
            <person name="Kallesoee T."/>
            <person name="Kiesau P."/>
            <person name="Kirchrath L."/>
            <person name="Koetter P."/>
            <person name="Korol S."/>
            <person name="Liebl S."/>
            <person name="Logghe M."/>
            <person name="Lohan A.J.E."/>
            <person name="Louis E.J."/>
            <person name="Li Z.Y."/>
            <person name="Maat M.J."/>
            <person name="Mallet L."/>
            <person name="Mannhaupt G."/>
            <person name="Messenguy F."/>
            <person name="Miosga T."/>
            <person name="Molemans F."/>
            <person name="Mueller S."/>
            <person name="Nasr F."/>
            <person name="Obermaier B."/>
            <person name="Perea J."/>
            <person name="Pierard A."/>
            <person name="Piravandi E."/>
            <person name="Pohl F.M."/>
            <person name="Pohl T.M."/>
            <person name="Potier S."/>
            <person name="Proft M."/>
            <person name="Purnelle B."/>
            <person name="Ramezani Rad M."/>
            <person name="Rieger M."/>
            <person name="Rose M."/>
            <person name="Schaaff-Gerstenschlaeger I."/>
            <person name="Scherens B."/>
            <person name="Schwarzlose C."/>
            <person name="Skala J."/>
            <person name="Slonimski P.P."/>
            <person name="Smits P.H.M."/>
            <person name="Souciet J.-L."/>
            <person name="Steensma H.Y."/>
            <person name="Stucka R."/>
            <person name="Urrestarazu L.A."/>
            <person name="van der Aart Q.J.M."/>
            <person name="Van Dyck L."/>
            <person name="Vassarotti A."/>
            <person name="Vetter I."/>
            <person name="Vierendeels F."/>
            <person name="Vissers S."/>
            <person name="Wagner G."/>
            <person name="de Wergifosse P."/>
            <person name="Wolfe K.H."/>
            <person name="Zagulski M."/>
            <person name="Zimmermann F.K."/>
            <person name="Mewes H.-W."/>
            <person name="Kleine K."/>
        </authorList>
    </citation>
    <scope>NUCLEOTIDE SEQUENCE [LARGE SCALE GENOMIC DNA]</scope>
    <source>
        <strain>ATCC 204508 / S288c</strain>
    </source>
</reference>
<reference key="2">
    <citation type="journal article" date="2014" name="G3 (Bethesda)">
        <title>The reference genome sequence of Saccharomyces cerevisiae: Then and now.</title>
        <authorList>
            <person name="Engel S.R."/>
            <person name="Dietrich F.S."/>
            <person name="Fisk D.G."/>
            <person name="Binkley G."/>
            <person name="Balakrishnan R."/>
            <person name="Costanzo M.C."/>
            <person name="Dwight S.S."/>
            <person name="Hitz B.C."/>
            <person name="Karra K."/>
            <person name="Nash R.S."/>
            <person name="Weng S."/>
            <person name="Wong E.D."/>
            <person name="Lloyd P."/>
            <person name="Skrzypek M.S."/>
            <person name="Miyasato S.R."/>
            <person name="Simison M."/>
            <person name="Cherry J.M."/>
        </authorList>
    </citation>
    <scope>GENOME REANNOTATION</scope>
    <source>
        <strain>ATCC 204508 / S288c</strain>
    </source>
</reference>
<reference key="3">
    <citation type="journal article" date="2003" name="Genetics">
        <title>Mode of selection and experimental evolution of antifungal drug resistance in Saccharomyces cerevisiae.</title>
        <authorList>
            <person name="Anderson J.B."/>
            <person name="Sirjusingh C."/>
            <person name="Parsons A.B."/>
            <person name="Boone C."/>
            <person name="Wickens C."/>
            <person name="Cowen L.E."/>
            <person name="Kohn L.M."/>
        </authorList>
    </citation>
    <scope>DISRUPTION PHENOTYPE</scope>
</reference>
<reference key="4">
    <citation type="journal article" date="2004" name="Antimicrob. Agents Chemother.">
        <title>Genomic approach to identification of mutations affecting caspofungin susceptibility in Saccharomyces cerevisiae.</title>
        <authorList>
            <person name="Markovich S."/>
            <person name="Yekutiel A."/>
            <person name="Shalit I."/>
            <person name="Shadkchan Y."/>
            <person name="Osherov N."/>
        </authorList>
    </citation>
    <scope>DISRUPTION PHENOTYPE</scope>
</reference>
<reference key="5">
    <citation type="journal article" date="2006" name="J. Proteome Res.">
        <title>Toward the complete yeast mitochondrial proteome: multidimensional separation techniques for mitochondrial proteomics.</title>
        <authorList>
            <person name="Reinders J."/>
            <person name="Zahedi R.P."/>
            <person name="Pfanner N."/>
            <person name="Meisinger C."/>
            <person name="Sickmann A."/>
        </authorList>
    </citation>
    <scope>SUBCELLULAR LOCATION [LARGE SCALE ANALYSIS]</scope>
    <scope>IDENTIFICATION BY MASS SPECTROMETRY</scope>
</reference>
<reference key="6">
    <citation type="journal article" date="2006" name="Proc. Natl. Acad. Sci. U.S.A.">
        <title>A global topology map of the Saccharomyces cerevisiae membrane proteome.</title>
        <authorList>
            <person name="Kim H."/>
            <person name="Melen K."/>
            <person name="Oesterberg M."/>
            <person name="von Heijne G."/>
        </authorList>
    </citation>
    <scope>TOPOLOGY [LARGE SCALE ANALYSIS]</scope>
    <source>
        <strain>ATCC 208353 / W303-1A</strain>
    </source>
</reference>
<reference key="7">
    <citation type="journal article" date="2008" name="FEMS Yeast Res.">
        <title>Addition of ammonia or amino acids to a nitrogen-depleted medium affects gene expression patterns in yeast cells during alcoholic fermentation.</title>
        <authorList>
            <person name="Jimenez-Marti E."/>
            <person name="del Olmo M.-L."/>
        </authorList>
    </citation>
    <scope>INDUCTION</scope>
</reference>
<reference key="8">
    <citation type="journal article" date="2008" name="Genetics">
        <title>A genomewide suppressor and enhancer analysis of cdc13-1 reveals varied cellular processes influencing telomere capping in Saccharomyces cerevisiae.</title>
        <authorList>
            <person name="Addinall S.G."/>
            <person name="Downey M."/>
            <person name="Yu M."/>
            <person name="Zubko M.K."/>
            <person name="Dewar J."/>
            <person name="Leake A."/>
            <person name="Hallinan J."/>
            <person name="Shaw O."/>
            <person name="James K."/>
            <person name="Wilkinson D.J."/>
            <person name="Wipat A."/>
            <person name="Durocher D."/>
            <person name="Lydall D."/>
        </authorList>
    </citation>
    <scope>GENE NAME</scope>
    <scope>DISRUPTION PHENOTYPE</scope>
</reference>
<reference key="9">
    <citation type="journal article" date="2012" name="Proc. Natl. Acad. Sci. U.S.A.">
        <title>Heptahelical protein PQLC2 is a lysosomal cationic amino acid exporter underlying the action of cysteamine in cystinosis therapy.</title>
        <authorList>
            <person name="Jezegou A."/>
            <person name="Llinares E."/>
            <person name="Anne C."/>
            <person name="Kieffer-Jaquinod S."/>
            <person name="O'Regan S."/>
            <person name="Aupetit J."/>
            <person name="Chabli A."/>
            <person name="Sagne C."/>
            <person name="Debacker C."/>
            <person name="Chadefaux-Vekemans B."/>
            <person name="Journet A."/>
            <person name="Andre B."/>
            <person name="Gasnier B."/>
        </authorList>
    </citation>
    <scope>SUBCELLULAR LOCATION</scope>
    <scope>INDUCTION</scope>
</reference>
<reference key="10">
    <citation type="journal article" date="2016" name="Biosci. Biotechnol. Biochem.">
        <title>Ypq3p-dependent histidine uptake by the vacuolar membrane vesicles of Saccharomyces cerevisiae.</title>
        <authorList>
            <person name="Manabe K."/>
            <person name="Kawano-Kawada M."/>
            <person name="Ikeda K."/>
            <person name="Sekito T."/>
            <person name="Kakinuma Y."/>
        </authorList>
    </citation>
    <scope>FUNCTION</scope>
    <scope>INDUCTION</scope>
    <scope>DISRUPTION PHENOTYPE</scope>
</reference>
<reference key="11">
    <citation type="journal article" date="2020" name="PLoS Genet.">
        <title>Nitrogen coordinated import and export of arginine across the yeast vacuolar membrane.</title>
        <authorList>
            <person name="Cools M."/>
            <person name="Lissoir S."/>
            <person name="Bodo E."/>
            <person name="Ulloa-Calzonzin J."/>
            <person name="DeLuna A."/>
            <person name="Georis I."/>
            <person name="Andre B."/>
        </authorList>
    </citation>
    <scope>FUNCTION</scope>
</reference>
<proteinExistence type="evidence at protein level"/>